<sequence>MNIHEYQGKDILRKFGVAVPKGIVAFSPEEAKQAAIQLFEEQNSPVVVIKAQIHAGGRGKAGGVKLAKSPEEVFDIAQQMLGITLVTHQTGPEGKEVRRLLVEEGMNIDKEFYVGITLDRSTSQNVLMVSTEGGMEIEKVAEETPEKLLKIQVNPLFGLQAFQARQAAFFLELEGEQFKNTVKFITALYNAYTSIDAAIAEINPLVVTKEGRVLALDAKINFDSNALFRHKDFLELRDISEEDPFEVEASKSNLNYVRLDGNVGCMVNGAGLAMGTMDMIQLAGGRPANFLDVGGGASPQTVEEGFKIILSDKNVKAILVNIFGGIVRCDRVAGGIIEAAKKVDLHLPVIVRLEGTNASIAQKMLDESGLNLIAAKGLHDAAKKVHEALEPA</sequence>
<proteinExistence type="inferred from homology"/>
<organism>
    <name type="scientific">Chlorobium phaeobacteroides (strain DSM 266 / SMG 266 / 2430)</name>
    <dbReference type="NCBI Taxonomy" id="290317"/>
    <lineage>
        <taxon>Bacteria</taxon>
        <taxon>Pseudomonadati</taxon>
        <taxon>Chlorobiota</taxon>
        <taxon>Chlorobiia</taxon>
        <taxon>Chlorobiales</taxon>
        <taxon>Chlorobiaceae</taxon>
        <taxon>Chlorobium/Pelodictyon group</taxon>
        <taxon>Chlorobium</taxon>
    </lineage>
</organism>
<reference key="1">
    <citation type="submission" date="2006-12" db="EMBL/GenBank/DDBJ databases">
        <title>Complete sequence of Chlorobium phaeobacteroides DSM 266.</title>
        <authorList>
            <consortium name="US DOE Joint Genome Institute"/>
            <person name="Copeland A."/>
            <person name="Lucas S."/>
            <person name="Lapidus A."/>
            <person name="Barry K."/>
            <person name="Detter J.C."/>
            <person name="Glavina del Rio T."/>
            <person name="Hammon N."/>
            <person name="Israni S."/>
            <person name="Pitluck S."/>
            <person name="Goltsman E."/>
            <person name="Schmutz J."/>
            <person name="Larimer F."/>
            <person name="Land M."/>
            <person name="Hauser L."/>
            <person name="Mikhailova N."/>
            <person name="Li T."/>
            <person name="Overmann J."/>
            <person name="Bryant D.A."/>
            <person name="Richardson P."/>
        </authorList>
    </citation>
    <scope>NUCLEOTIDE SEQUENCE [LARGE SCALE GENOMIC DNA]</scope>
    <source>
        <strain>DSM 266 / SMG 266 / 2430</strain>
    </source>
</reference>
<gene>
    <name evidence="1" type="primary">sucC</name>
    <name type="ordered locus">Cpha266_0623</name>
</gene>
<feature type="chain" id="PRO_1000082062" description="Succinate--CoA ligase [ADP-forming] subunit beta">
    <location>
        <begin position="1"/>
        <end position="392"/>
    </location>
</feature>
<feature type="domain" description="ATP-grasp" evidence="1">
    <location>
        <begin position="9"/>
        <end position="248"/>
    </location>
</feature>
<feature type="binding site" evidence="1">
    <location>
        <position position="50"/>
    </location>
    <ligand>
        <name>ATP</name>
        <dbReference type="ChEBI" id="CHEBI:30616"/>
    </ligand>
</feature>
<feature type="binding site" evidence="1">
    <location>
        <begin position="57"/>
        <end position="59"/>
    </location>
    <ligand>
        <name>ATP</name>
        <dbReference type="ChEBI" id="CHEBI:30616"/>
    </ligand>
</feature>
<feature type="binding site" evidence="1">
    <location>
        <position position="103"/>
    </location>
    <ligand>
        <name>ATP</name>
        <dbReference type="ChEBI" id="CHEBI:30616"/>
    </ligand>
</feature>
<feature type="binding site" evidence="1">
    <location>
        <position position="106"/>
    </location>
    <ligand>
        <name>ATP</name>
        <dbReference type="ChEBI" id="CHEBI:30616"/>
    </ligand>
</feature>
<feature type="binding site" evidence="1">
    <location>
        <position position="111"/>
    </location>
    <ligand>
        <name>ATP</name>
        <dbReference type="ChEBI" id="CHEBI:30616"/>
    </ligand>
</feature>
<feature type="binding site" evidence="1">
    <location>
        <position position="203"/>
    </location>
    <ligand>
        <name>Mg(2+)</name>
        <dbReference type="ChEBI" id="CHEBI:18420"/>
    </ligand>
</feature>
<feature type="binding site" evidence="1">
    <location>
        <position position="217"/>
    </location>
    <ligand>
        <name>Mg(2+)</name>
        <dbReference type="ChEBI" id="CHEBI:18420"/>
    </ligand>
</feature>
<feature type="binding site" evidence="1">
    <location>
        <position position="268"/>
    </location>
    <ligand>
        <name>substrate</name>
        <note>ligand shared with subunit alpha</note>
    </ligand>
</feature>
<feature type="binding site" evidence="1">
    <location>
        <begin position="325"/>
        <end position="327"/>
    </location>
    <ligand>
        <name>substrate</name>
        <note>ligand shared with subunit alpha</note>
    </ligand>
</feature>
<keyword id="KW-0067">ATP-binding</keyword>
<keyword id="KW-0436">Ligase</keyword>
<keyword id="KW-0460">Magnesium</keyword>
<keyword id="KW-0479">Metal-binding</keyword>
<keyword id="KW-0547">Nucleotide-binding</keyword>
<keyword id="KW-1185">Reference proteome</keyword>
<keyword id="KW-0816">Tricarboxylic acid cycle</keyword>
<accession>A1BE51</accession>
<dbReference type="EC" id="6.2.1.5" evidence="1"/>
<dbReference type="EMBL" id="CP000492">
    <property type="protein sequence ID" value="ABL64678.1"/>
    <property type="molecule type" value="Genomic_DNA"/>
</dbReference>
<dbReference type="RefSeq" id="WP_011744511.1">
    <property type="nucleotide sequence ID" value="NC_008639.1"/>
</dbReference>
<dbReference type="SMR" id="A1BE51"/>
<dbReference type="STRING" id="290317.Cpha266_0623"/>
<dbReference type="KEGG" id="cph:Cpha266_0623"/>
<dbReference type="eggNOG" id="COG0045">
    <property type="taxonomic scope" value="Bacteria"/>
</dbReference>
<dbReference type="HOGENOM" id="CLU_037430_0_2_10"/>
<dbReference type="OrthoDB" id="9802602at2"/>
<dbReference type="UniPathway" id="UPA00223">
    <property type="reaction ID" value="UER00999"/>
</dbReference>
<dbReference type="Proteomes" id="UP000008701">
    <property type="component" value="Chromosome"/>
</dbReference>
<dbReference type="GO" id="GO:0005829">
    <property type="term" value="C:cytosol"/>
    <property type="evidence" value="ECO:0007669"/>
    <property type="project" value="TreeGrafter"/>
</dbReference>
<dbReference type="GO" id="GO:0042709">
    <property type="term" value="C:succinate-CoA ligase complex"/>
    <property type="evidence" value="ECO:0007669"/>
    <property type="project" value="TreeGrafter"/>
</dbReference>
<dbReference type="GO" id="GO:0005524">
    <property type="term" value="F:ATP binding"/>
    <property type="evidence" value="ECO:0007669"/>
    <property type="project" value="UniProtKB-UniRule"/>
</dbReference>
<dbReference type="GO" id="GO:0000287">
    <property type="term" value="F:magnesium ion binding"/>
    <property type="evidence" value="ECO:0007669"/>
    <property type="project" value="UniProtKB-UniRule"/>
</dbReference>
<dbReference type="GO" id="GO:0004775">
    <property type="term" value="F:succinate-CoA ligase (ADP-forming) activity"/>
    <property type="evidence" value="ECO:0007669"/>
    <property type="project" value="UniProtKB-UniRule"/>
</dbReference>
<dbReference type="GO" id="GO:0004776">
    <property type="term" value="F:succinate-CoA ligase (GDP-forming) activity"/>
    <property type="evidence" value="ECO:0007669"/>
    <property type="project" value="RHEA"/>
</dbReference>
<dbReference type="GO" id="GO:0006104">
    <property type="term" value="P:succinyl-CoA metabolic process"/>
    <property type="evidence" value="ECO:0007669"/>
    <property type="project" value="TreeGrafter"/>
</dbReference>
<dbReference type="GO" id="GO:0006099">
    <property type="term" value="P:tricarboxylic acid cycle"/>
    <property type="evidence" value="ECO:0007669"/>
    <property type="project" value="UniProtKB-UniRule"/>
</dbReference>
<dbReference type="FunFam" id="3.30.1490.20:FF:000002">
    <property type="entry name" value="Succinate--CoA ligase [ADP-forming] subunit beta"/>
    <property type="match status" value="1"/>
</dbReference>
<dbReference type="FunFam" id="3.30.470.20:FF:000002">
    <property type="entry name" value="Succinate--CoA ligase [ADP-forming] subunit beta"/>
    <property type="match status" value="1"/>
</dbReference>
<dbReference type="FunFam" id="3.40.50.261:FF:000001">
    <property type="entry name" value="Succinate--CoA ligase [ADP-forming] subunit beta"/>
    <property type="match status" value="1"/>
</dbReference>
<dbReference type="Gene3D" id="3.30.1490.20">
    <property type="entry name" value="ATP-grasp fold, A domain"/>
    <property type="match status" value="1"/>
</dbReference>
<dbReference type="Gene3D" id="3.30.470.20">
    <property type="entry name" value="ATP-grasp fold, B domain"/>
    <property type="match status" value="1"/>
</dbReference>
<dbReference type="Gene3D" id="3.40.50.261">
    <property type="entry name" value="Succinyl-CoA synthetase domains"/>
    <property type="match status" value="1"/>
</dbReference>
<dbReference type="HAMAP" id="MF_00558">
    <property type="entry name" value="Succ_CoA_beta"/>
    <property type="match status" value="1"/>
</dbReference>
<dbReference type="InterPro" id="IPR011761">
    <property type="entry name" value="ATP-grasp"/>
</dbReference>
<dbReference type="InterPro" id="IPR013650">
    <property type="entry name" value="ATP-grasp_succ-CoA_synth-type"/>
</dbReference>
<dbReference type="InterPro" id="IPR013815">
    <property type="entry name" value="ATP_grasp_subdomain_1"/>
</dbReference>
<dbReference type="InterPro" id="IPR017866">
    <property type="entry name" value="Succ-CoA_synthase_bsu_CS"/>
</dbReference>
<dbReference type="InterPro" id="IPR005811">
    <property type="entry name" value="SUCC_ACL_C"/>
</dbReference>
<dbReference type="InterPro" id="IPR005809">
    <property type="entry name" value="Succ_CoA_ligase-like_bsu"/>
</dbReference>
<dbReference type="InterPro" id="IPR016102">
    <property type="entry name" value="Succinyl-CoA_synth-like"/>
</dbReference>
<dbReference type="NCBIfam" id="NF001913">
    <property type="entry name" value="PRK00696.1"/>
    <property type="match status" value="1"/>
</dbReference>
<dbReference type="NCBIfam" id="TIGR01016">
    <property type="entry name" value="sucCoAbeta"/>
    <property type="match status" value="1"/>
</dbReference>
<dbReference type="PANTHER" id="PTHR11815:SF10">
    <property type="entry name" value="SUCCINATE--COA LIGASE [GDP-FORMING] SUBUNIT BETA, MITOCHONDRIAL"/>
    <property type="match status" value="1"/>
</dbReference>
<dbReference type="PANTHER" id="PTHR11815">
    <property type="entry name" value="SUCCINYL-COA SYNTHETASE BETA CHAIN"/>
    <property type="match status" value="1"/>
</dbReference>
<dbReference type="Pfam" id="PF08442">
    <property type="entry name" value="ATP-grasp_2"/>
    <property type="match status" value="1"/>
</dbReference>
<dbReference type="Pfam" id="PF00549">
    <property type="entry name" value="Ligase_CoA"/>
    <property type="match status" value="1"/>
</dbReference>
<dbReference type="PIRSF" id="PIRSF001554">
    <property type="entry name" value="SucCS_beta"/>
    <property type="match status" value="1"/>
</dbReference>
<dbReference type="SUPFAM" id="SSF56059">
    <property type="entry name" value="Glutathione synthetase ATP-binding domain-like"/>
    <property type="match status" value="1"/>
</dbReference>
<dbReference type="SUPFAM" id="SSF52210">
    <property type="entry name" value="Succinyl-CoA synthetase domains"/>
    <property type="match status" value="1"/>
</dbReference>
<dbReference type="PROSITE" id="PS50975">
    <property type="entry name" value="ATP_GRASP"/>
    <property type="match status" value="1"/>
</dbReference>
<dbReference type="PROSITE" id="PS01217">
    <property type="entry name" value="SUCCINYL_COA_LIG_3"/>
    <property type="match status" value="1"/>
</dbReference>
<comment type="function">
    <text evidence="1">Succinyl-CoA synthetase functions in the citric acid cycle (TCA), coupling the hydrolysis of succinyl-CoA to the synthesis of either ATP or GTP and thus represents the only step of substrate-level phosphorylation in the TCA. The beta subunit provides nucleotide specificity of the enzyme and binds the substrate succinate, while the binding sites for coenzyme A and phosphate are found in the alpha subunit.</text>
</comment>
<comment type="catalytic activity">
    <reaction evidence="1">
        <text>succinate + ATP + CoA = succinyl-CoA + ADP + phosphate</text>
        <dbReference type="Rhea" id="RHEA:17661"/>
        <dbReference type="ChEBI" id="CHEBI:30031"/>
        <dbReference type="ChEBI" id="CHEBI:30616"/>
        <dbReference type="ChEBI" id="CHEBI:43474"/>
        <dbReference type="ChEBI" id="CHEBI:57287"/>
        <dbReference type="ChEBI" id="CHEBI:57292"/>
        <dbReference type="ChEBI" id="CHEBI:456216"/>
        <dbReference type="EC" id="6.2.1.5"/>
    </reaction>
    <physiologicalReaction direction="right-to-left" evidence="1">
        <dbReference type="Rhea" id="RHEA:17663"/>
    </physiologicalReaction>
</comment>
<comment type="catalytic activity">
    <reaction evidence="1">
        <text>GTP + succinate + CoA = succinyl-CoA + GDP + phosphate</text>
        <dbReference type="Rhea" id="RHEA:22120"/>
        <dbReference type="ChEBI" id="CHEBI:30031"/>
        <dbReference type="ChEBI" id="CHEBI:37565"/>
        <dbReference type="ChEBI" id="CHEBI:43474"/>
        <dbReference type="ChEBI" id="CHEBI:57287"/>
        <dbReference type="ChEBI" id="CHEBI:57292"/>
        <dbReference type="ChEBI" id="CHEBI:58189"/>
    </reaction>
    <physiologicalReaction direction="right-to-left" evidence="1">
        <dbReference type="Rhea" id="RHEA:22122"/>
    </physiologicalReaction>
</comment>
<comment type="cofactor">
    <cofactor evidence="1">
        <name>Mg(2+)</name>
        <dbReference type="ChEBI" id="CHEBI:18420"/>
    </cofactor>
    <text evidence="1">Binds 1 Mg(2+) ion per subunit.</text>
</comment>
<comment type="pathway">
    <text evidence="1">Carbohydrate metabolism; tricarboxylic acid cycle; succinate from succinyl-CoA (ligase route): step 1/1.</text>
</comment>
<comment type="subunit">
    <text evidence="1">Heterotetramer of two alpha and two beta subunits.</text>
</comment>
<comment type="similarity">
    <text evidence="1">Belongs to the succinate/malate CoA ligase beta subunit family.</text>
</comment>
<name>SUCC_CHLPD</name>
<protein>
    <recommendedName>
        <fullName evidence="1">Succinate--CoA ligase [ADP-forming] subunit beta</fullName>
        <ecNumber evidence="1">6.2.1.5</ecNumber>
    </recommendedName>
    <alternativeName>
        <fullName evidence="1">Succinyl-CoA synthetase subunit beta</fullName>
        <shortName evidence="1">SCS-beta</shortName>
    </alternativeName>
</protein>
<evidence type="ECO:0000255" key="1">
    <source>
        <dbReference type="HAMAP-Rule" id="MF_00558"/>
    </source>
</evidence>